<gene>
    <name evidence="1" type="primary">rplQ</name>
    <name type="ordered locus">SSON_3435</name>
</gene>
<dbReference type="EMBL" id="CP000038">
    <property type="protein sequence ID" value="AAZ89997.1"/>
    <property type="molecule type" value="Genomic_DNA"/>
</dbReference>
<dbReference type="RefSeq" id="WP_001216368.1">
    <property type="nucleotide sequence ID" value="NC_007384.1"/>
</dbReference>
<dbReference type="SMR" id="Q3YWW5"/>
<dbReference type="GeneID" id="97442834"/>
<dbReference type="KEGG" id="ssn:SSON_3435"/>
<dbReference type="HOGENOM" id="CLU_074407_2_0_6"/>
<dbReference type="Proteomes" id="UP000002529">
    <property type="component" value="Chromosome"/>
</dbReference>
<dbReference type="GO" id="GO:0022625">
    <property type="term" value="C:cytosolic large ribosomal subunit"/>
    <property type="evidence" value="ECO:0007669"/>
    <property type="project" value="TreeGrafter"/>
</dbReference>
<dbReference type="GO" id="GO:0003735">
    <property type="term" value="F:structural constituent of ribosome"/>
    <property type="evidence" value="ECO:0007669"/>
    <property type="project" value="InterPro"/>
</dbReference>
<dbReference type="GO" id="GO:0006412">
    <property type="term" value="P:translation"/>
    <property type="evidence" value="ECO:0007669"/>
    <property type="project" value="UniProtKB-UniRule"/>
</dbReference>
<dbReference type="FunFam" id="3.90.1030.10:FF:000001">
    <property type="entry name" value="50S ribosomal protein L17"/>
    <property type="match status" value="1"/>
</dbReference>
<dbReference type="Gene3D" id="3.90.1030.10">
    <property type="entry name" value="Ribosomal protein L17"/>
    <property type="match status" value="1"/>
</dbReference>
<dbReference type="HAMAP" id="MF_01368">
    <property type="entry name" value="Ribosomal_bL17"/>
    <property type="match status" value="1"/>
</dbReference>
<dbReference type="InterPro" id="IPR000456">
    <property type="entry name" value="Ribosomal_bL17"/>
</dbReference>
<dbReference type="InterPro" id="IPR047859">
    <property type="entry name" value="Ribosomal_bL17_CS"/>
</dbReference>
<dbReference type="InterPro" id="IPR036373">
    <property type="entry name" value="Ribosomal_bL17_sf"/>
</dbReference>
<dbReference type="NCBIfam" id="TIGR00059">
    <property type="entry name" value="L17"/>
    <property type="match status" value="1"/>
</dbReference>
<dbReference type="PANTHER" id="PTHR14413:SF16">
    <property type="entry name" value="LARGE RIBOSOMAL SUBUNIT PROTEIN BL17M"/>
    <property type="match status" value="1"/>
</dbReference>
<dbReference type="PANTHER" id="PTHR14413">
    <property type="entry name" value="RIBOSOMAL PROTEIN L17"/>
    <property type="match status" value="1"/>
</dbReference>
<dbReference type="Pfam" id="PF01196">
    <property type="entry name" value="Ribosomal_L17"/>
    <property type="match status" value="1"/>
</dbReference>
<dbReference type="SUPFAM" id="SSF64263">
    <property type="entry name" value="Prokaryotic ribosomal protein L17"/>
    <property type="match status" value="1"/>
</dbReference>
<dbReference type="PROSITE" id="PS01167">
    <property type="entry name" value="RIBOSOMAL_L17"/>
    <property type="match status" value="1"/>
</dbReference>
<keyword id="KW-1185">Reference proteome</keyword>
<keyword id="KW-0687">Ribonucleoprotein</keyword>
<keyword id="KW-0689">Ribosomal protein</keyword>
<comment type="subunit">
    <text evidence="1">Part of the 50S ribosomal subunit. Contacts protein L32.</text>
</comment>
<comment type="similarity">
    <text evidence="1">Belongs to the bacterial ribosomal protein bL17 family.</text>
</comment>
<reference key="1">
    <citation type="journal article" date="2005" name="Nucleic Acids Res.">
        <title>Genome dynamics and diversity of Shigella species, the etiologic agents of bacillary dysentery.</title>
        <authorList>
            <person name="Yang F."/>
            <person name="Yang J."/>
            <person name="Zhang X."/>
            <person name="Chen L."/>
            <person name="Jiang Y."/>
            <person name="Yan Y."/>
            <person name="Tang X."/>
            <person name="Wang J."/>
            <person name="Xiong Z."/>
            <person name="Dong J."/>
            <person name="Xue Y."/>
            <person name="Zhu Y."/>
            <person name="Xu X."/>
            <person name="Sun L."/>
            <person name="Chen S."/>
            <person name="Nie H."/>
            <person name="Peng J."/>
            <person name="Xu J."/>
            <person name="Wang Y."/>
            <person name="Yuan Z."/>
            <person name="Wen Y."/>
            <person name="Yao Z."/>
            <person name="Shen Y."/>
            <person name="Qiang B."/>
            <person name="Hou Y."/>
            <person name="Yu J."/>
            <person name="Jin Q."/>
        </authorList>
    </citation>
    <scope>NUCLEOTIDE SEQUENCE [LARGE SCALE GENOMIC DNA]</scope>
    <source>
        <strain>Ss046</strain>
    </source>
</reference>
<protein>
    <recommendedName>
        <fullName evidence="1">Large ribosomal subunit protein bL17</fullName>
    </recommendedName>
    <alternativeName>
        <fullName evidence="2">50S ribosomal protein L17</fullName>
    </alternativeName>
</protein>
<accession>Q3YWW5</accession>
<proteinExistence type="inferred from homology"/>
<feature type="chain" id="PRO_0000267947" description="Large ribosomal subunit protein bL17">
    <location>
        <begin position="1"/>
        <end position="127"/>
    </location>
</feature>
<organism>
    <name type="scientific">Shigella sonnei (strain Ss046)</name>
    <dbReference type="NCBI Taxonomy" id="300269"/>
    <lineage>
        <taxon>Bacteria</taxon>
        <taxon>Pseudomonadati</taxon>
        <taxon>Pseudomonadota</taxon>
        <taxon>Gammaproteobacteria</taxon>
        <taxon>Enterobacterales</taxon>
        <taxon>Enterobacteriaceae</taxon>
        <taxon>Shigella</taxon>
    </lineage>
</organism>
<name>RL17_SHISS</name>
<sequence>MRHRKSGRQLNRNSSHRQAMFRNMAGSLVRHEIIKTTLPKAKELRRVVEPLITLAKTDSVANRRLAFARTRDNEIVAKLFNELGPRFASRAGGYTRILKCGFRAGDNAPMAYIELVDRSEKAEAAAE</sequence>
<evidence type="ECO:0000255" key="1">
    <source>
        <dbReference type="HAMAP-Rule" id="MF_01368"/>
    </source>
</evidence>
<evidence type="ECO:0000305" key="2"/>